<evidence type="ECO:0000250" key="1"/>
<evidence type="ECO:0000250" key="2">
    <source>
        <dbReference type="UniProtKB" id="Q96HI0"/>
    </source>
</evidence>
<evidence type="ECO:0000256" key="3">
    <source>
        <dbReference type="SAM" id="MobiDB-lite"/>
    </source>
</evidence>
<evidence type="ECO:0000305" key="4"/>
<dbReference type="EC" id="3.4.22.-"/>
<dbReference type="EMBL" id="AB074445">
    <property type="protein sequence ID" value="BAB72076.1"/>
    <property type="molecule type" value="mRNA"/>
</dbReference>
<dbReference type="RefSeq" id="NP_001270238.1">
    <property type="nucleotide sequence ID" value="NM_001283309.1"/>
</dbReference>
<dbReference type="SMR" id="Q8WP32"/>
<dbReference type="STRING" id="9541.ENSMFAP00000004684"/>
<dbReference type="MEROPS" id="C48.008"/>
<dbReference type="eggNOG" id="KOG0778">
    <property type="taxonomic scope" value="Eukaryota"/>
</dbReference>
<dbReference type="Proteomes" id="UP000233100">
    <property type="component" value="Unplaced"/>
</dbReference>
<dbReference type="GO" id="GO:0005730">
    <property type="term" value="C:nucleolus"/>
    <property type="evidence" value="ECO:0007669"/>
    <property type="project" value="UniProtKB-SubCell"/>
</dbReference>
<dbReference type="GO" id="GO:0016929">
    <property type="term" value="F:deSUMOylase activity"/>
    <property type="evidence" value="ECO:0007669"/>
    <property type="project" value="TreeGrafter"/>
</dbReference>
<dbReference type="GO" id="GO:0051301">
    <property type="term" value="P:cell division"/>
    <property type="evidence" value="ECO:0007669"/>
    <property type="project" value="UniProtKB-KW"/>
</dbReference>
<dbReference type="GO" id="GO:0016926">
    <property type="term" value="P:protein desumoylation"/>
    <property type="evidence" value="ECO:0007669"/>
    <property type="project" value="TreeGrafter"/>
</dbReference>
<dbReference type="GO" id="GO:0006508">
    <property type="term" value="P:proteolysis"/>
    <property type="evidence" value="ECO:0007669"/>
    <property type="project" value="UniProtKB-KW"/>
</dbReference>
<dbReference type="FunFam" id="3.40.395.10:FF:000002">
    <property type="entry name" value="Putative sentrin-specific protease 5"/>
    <property type="match status" value="1"/>
</dbReference>
<dbReference type="Gene3D" id="3.40.395.10">
    <property type="entry name" value="Adenoviral Proteinase, Chain A"/>
    <property type="match status" value="1"/>
</dbReference>
<dbReference type="InterPro" id="IPR038765">
    <property type="entry name" value="Papain-like_cys_pep_sf"/>
</dbReference>
<dbReference type="InterPro" id="IPR003653">
    <property type="entry name" value="Peptidase_C48_C"/>
</dbReference>
<dbReference type="InterPro" id="IPR045577">
    <property type="entry name" value="SENP3_5_cons_dom"/>
</dbReference>
<dbReference type="PANTHER" id="PTHR12606:SF10">
    <property type="entry name" value="SENTRIN-SPECIFIC PROTEASE 5"/>
    <property type="match status" value="1"/>
</dbReference>
<dbReference type="PANTHER" id="PTHR12606">
    <property type="entry name" value="SENTRIN/SUMO-SPECIFIC PROTEASE"/>
    <property type="match status" value="1"/>
</dbReference>
<dbReference type="Pfam" id="PF02902">
    <property type="entry name" value="Peptidase_C48"/>
    <property type="match status" value="1"/>
</dbReference>
<dbReference type="Pfam" id="PF19722">
    <property type="entry name" value="SENP3_5_N"/>
    <property type="match status" value="1"/>
</dbReference>
<dbReference type="SUPFAM" id="SSF54001">
    <property type="entry name" value="Cysteine proteinases"/>
    <property type="match status" value="1"/>
</dbReference>
<dbReference type="PROSITE" id="PS50600">
    <property type="entry name" value="ULP_PROTEASE"/>
    <property type="match status" value="1"/>
</dbReference>
<protein>
    <recommendedName>
        <fullName>Sentrin-specific protease 5</fullName>
        <ecNumber>3.4.22.-</ecNumber>
    </recommendedName>
    <alternativeName>
        <fullName>Sentrin/SUMO-specific protease SENP5</fullName>
    </alternativeName>
</protein>
<keyword id="KW-0131">Cell cycle</keyword>
<keyword id="KW-0132">Cell division</keyword>
<keyword id="KW-0378">Hydrolase</keyword>
<keyword id="KW-0539">Nucleus</keyword>
<keyword id="KW-0645">Protease</keyword>
<keyword id="KW-1185">Reference proteome</keyword>
<keyword id="KW-0788">Thiol protease</keyword>
<keyword id="KW-0833">Ubl conjugation pathway</keyword>
<feature type="chain" id="PRO_0000101724" description="Sentrin-specific protease 5">
    <location>
        <begin position="1"/>
        <end position="755"/>
    </location>
</feature>
<feature type="region of interest" description="Disordered" evidence="3">
    <location>
        <begin position="269"/>
        <end position="329"/>
    </location>
</feature>
<feature type="region of interest" description="Protease">
    <location>
        <begin position="563"/>
        <end position="724"/>
    </location>
</feature>
<feature type="compositionally biased region" description="Basic and acidic residues" evidence="3">
    <location>
        <begin position="272"/>
        <end position="283"/>
    </location>
</feature>
<feature type="active site" evidence="1">
    <location>
        <position position="646"/>
    </location>
</feature>
<feature type="active site" evidence="1">
    <location>
        <position position="663"/>
    </location>
</feature>
<feature type="active site" evidence="1">
    <location>
        <position position="713"/>
    </location>
</feature>
<comment type="function">
    <text evidence="2">Protease that catalyzes two essential functions in the SUMO pathway: processing of full-length SUMO3 to its mature form and deconjugation of SUMO2 and SUMO3 from targeted proteins. Has weak proteolytic activity against full-length SUMO1 or SUMO1 conjugates. Required for cell division.</text>
</comment>
<comment type="subunit">
    <text evidence="2">Interacts with CCAR2.</text>
</comment>
<comment type="subcellular location">
    <subcellularLocation>
        <location evidence="1">Nucleus</location>
        <location evidence="1">Nucleolus</location>
    </subcellularLocation>
</comment>
<comment type="similarity">
    <text evidence="4">Belongs to the peptidase C48 family.</text>
</comment>
<gene>
    <name type="primary">SENP5</name>
    <name type="ORF">QtsA-16408</name>
</gene>
<sequence>MKKQRKILWRKGIHLAFSEKWNTGFGGFKKFYFHQHLCILKAKLGRPITRNRQLRHFQGGKKALQIQKTWVKDEPPCAKTKFSVDTPHASTLSSPVKRKDTKHFVSSSRTLLRLQAEKLLSSAKNSDHEYCREKNLLKTVTDFPSNSALGQANGHRPRTDPQASDFPMKFNGESQSPGESGAIVITLSNHKRKGFCYGCCRGPEHHRNGGPLIPKQFQLNRHRRIKLSPLMMYEKLSMIRFRYRILRSQHFRTKSKVCKLRKAQRSWVQKVTGDHQETLRENGEGGSGSPFPSPEPKDPSCRQQPYFPDMDSNAVVKGTNSHVPDGHTKGSPFLGKELSLDEAFPDQQNGSATHAWDQSSCASPKWECTELIHDIPLPEHHSNTMFVSETEKEIATLGQENRTSSLSDDGVKLSVSGADTSVSSVDGPVSQKAVHSENSYQMEEDGSLKQNILSSELLDHPYCKSPLEAPLVCSGLKLENQVGGGKDSQKASPVDDEQLSVCLSGFLDEVMKKYGSLVPLSEKEVLGRLKDVFNEDFSNRKPFINREITNYRARHQKCNFRIFYNKHMLDMDDLATLDGQNWLNDQVINMYGELIMDAVPDKVHFFNSFFHRQLVTKGYNGVKRWTKKVDLFKKSLLLIPIHLEVHWSLITVTLSNRIISFYDSQGIHFKFCVENIRKYLLTEAREKNRPEFLQGWQTAVTKCIPQQKNDSDCGVFVLQYCKCLALEQPFQFSQEDMPRVRKRIYKELCECRLMD</sequence>
<name>SENP5_MACFA</name>
<proteinExistence type="evidence at transcript level"/>
<accession>Q8WP32</accession>
<organism>
    <name type="scientific">Macaca fascicularis</name>
    <name type="common">Crab-eating macaque</name>
    <name type="synonym">Cynomolgus monkey</name>
    <dbReference type="NCBI Taxonomy" id="9541"/>
    <lineage>
        <taxon>Eukaryota</taxon>
        <taxon>Metazoa</taxon>
        <taxon>Chordata</taxon>
        <taxon>Craniata</taxon>
        <taxon>Vertebrata</taxon>
        <taxon>Euteleostomi</taxon>
        <taxon>Mammalia</taxon>
        <taxon>Eutheria</taxon>
        <taxon>Euarchontoglires</taxon>
        <taxon>Primates</taxon>
        <taxon>Haplorrhini</taxon>
        <taxon>Catarrhini</taxon>
        <taxon>Cercopithecidae</taxon>
        <taxon>Cercopithecinae</taxon>
        <taxon>Macaca</taxon>
    </lineage>
</organism>
<reference key="1">
    <citation type="journal article" date="2002" name="BMC Genomics">
        <title>Cynomolgus monkey testicular cDNAs for discovery of novel human genes in the human genome sequence.</title>
        <authorList>
            <person name="Osada N."/>
            <person name="Hida M."/>
            <person name="Kusuda J."/>
            <person name="Tanuma R."/>
            <person name="Hirata M."/>
            <person name="Suto Y."/>
            <person name="Hirai M."/>
            <person name="Terao K."/>
            <person name="Sugano S."/>
            <person name="Hashimoto K."/>
        </authorList>
    </citation>
    <scope>NUCLEOTIDE SEQUENCE [LARGE SCALE MRNA]</scope>
    <source>
        <tissue>Testis</tissue>
    </source>
</reference>